<keyword id="KW-1035">Host cytoplasm</keyword>
<keyword id="KW-0964">Secreted</keyword>
<keyword id="KW-0843">Virulence</keyword>
<organism>
    <name type="scientific">Plasmopara viticola</name>
    <name type="common">Downy mildew of grapevine</name>
    <name type="synonym">Botrytis viticola</name>
    <dbReference type="NCBI Taxonomy" id="143451"/>
    <lineage>
        <taxon>Eukaryota</taxon>
        <taxon>Sar</taxon>
        <taxon>Stramenopiles</taxon>
        <taxon>Oomycota</taxon>
        <taxon>Peronosporales</taxon>
        <taxon>Peronosporaceae</taxon>
        <taxon>Plasmopara</taxon>
    </lineage>
</organism>
<gene>
    <name evidence="2" type="primary">NLP1</name>
</gene>
<sequence length="114" mass="12265">MSPWEAKWIRHSDVRPFPQPEPMTVEEKVAVMLKPELHLSSGCHPYPAVNDLGETNGGLKTTGAPSGMCKGSGWGSQFTVDTHHLEASGPSCTRGTFQKTCRRHTSGIATTGST</sequence>
<comment type="function">
    <text evidence="1">Probable secreted effector that may act as a pathogen-associated molecular pattern (PAMP) recognized by the plant immune system (PubMed:32117400). Seems not to induce necrosis, neither in several susceptible or resistant Vitis species nor in the dicot model plant Nicotiana benthamiana (PubMed:32117400).</text>
</comment>
<comment type="subcellular location">
    <subcellularLocation>
        <location evidence="4">Secreted</location>
    </subcellularLocation>
    <subcellularLocation>
        <location evidence="1">Host cytoplasm</location>
    </subcellularLocation>
</comment>
<comment type="induction">
    <text evidence="1">Expression is strongly induced during the first 24 hours of host infection (PubMed:32117400). Levels increase from the time point on when germ tubes enter the leaf and the maximum expression level is reached during the formation of first haustoria (PubMed:32117400). Thereafter, expression decreases during branching of hyphae (PubMed:32117400).</text>
</comment>
<comment type="domain">
    <text evidence="4">The structure of NLP effectors is remarkably conserved with a high level of conservation of a central region containing the conserved undecapeptide motif AIMYAWYFPKD and heptapeptide motif GHRHDWE.</text>
</comment>
<comment type="similarity">
    <text evidence="3">Belongs to the Necrosis inducing protein (NPP1) family.</text>
</comment>
<comment type="caution">
    <text evidence="4">NLP1 carries a deletion of a single nucleotide which leads an early stop-codon. Therefore, NLP1 is assumed to be a pseudogene with a length of 345 bp and a size of 114 amino acids.</text>
</comment>
<accession>A0A6G7KUU3</accession>
<accession>A0A6B9QR03</accession>
<dbReference type="EMBL" id="MN564834">
    <property type="protein sequence ID" value="QHG11501.1"/>
    <property type="molecule type" value="mRNA"/>
</dbReference>
<dbReference type="EMBL" id="MN938410">
    <property type="protein sequence ID" value="QII89138.1"/>
    <property type="molecule type" value="mRNA"/>
</dbReference>
<dbReference type="SMR" id="A0A6G7KUU3"/>
<dbReference type="GO" id="GO:0005576">
    <property type="term" value="C:extracellular region"/>
    <property type="evidence" value="ECO:0007669"/>
    <property type="project" value="UniProtKB-SubCell"/>
</dbReference>
<dbReference type="GO" id="GO:0030430">
    <property type="term" value="C:host cell cytoplasm"/>
    <property type="evidence" value="ECO:0007669"/>
    <property type="project" value="UniProtKB-SubCell"/>
</dbReference>
<dbReference type="InterPro" id="IPR008701">
    <property type="entry name" value="NPP1"/>
</dbReference>
<dbReference type="PANTHER" id="PTHR33657">
    <property type="entry name" value="DOMAIN PROTEIN, PUTATIVE (AFU_ORTHOLOGUE AFUA_5G00600)-RELATED"/>
    <property type="match status" value="1"/>
</dbReference>
<dbReference type="PANTHER" id="PTHR33657:SF8">
    <property type="entry name" value="DOMAIN PROTEIN, PUTATIVE (AFU_ORTHOLOGUE AFUA_5G00600)-RELATED"/>
    <property type="match status" value="1"/>
</dbReference>
<dbReference type="Pfam" id="PF05630">
    <property type="entry name" value="NPP1"/>
    <property type="match status" value="1"/>
</dbReference>
<proteinExistence type="evidence at transcript level"/>
<evidence type="ECO:0000269" key="1">
    <source>
    </source>
</evidence>
<evidence type="ECO:0000303" key="2">
    <source>
    </source>
</evidence>
<evidence type="ECO:0000305" key="3"/>
<evidence type="ECO:0000305" key="4">
    <source>
    </source>
</evidence>
<name>NLP1_PLAVT</name>
<protein>
    <recommendedName>
        <fullName evidence="2">NLP effector protein 1</fullName>
    </recommendedName>
    <alternativeName>
        <fullName evidence="2">Nep1-like protein 1</fullName>
    </alternativeName>
</protein>
<reference key="1">
    <citation type="journal article" date="2020" name="Front. Plant Sci.">
        <title>Identification and characterization of Nep1-like proteins from the grapevine downy mildew pathogen Plasmopara viticola.</title>
        <authorList>
            <person name="Schumacher S."/>
            <person name="Grosser K."/>
            <person name="Voegele R.T."/>
            <person name="Kassemeyer H.H."/>
            <person name="Fuchs R."/>
        </authorList>
    </citation>
    <scope>NUCLEOTIDE SEQUENCE [MRNA]</scope>
    <scope>FUNCTION</scope>
    <scope>INDUCTION</scope>
    <scope>SUBCELLULAR LOCATION</scope>
    <source>
        <strain>Pv1446</strain>
    </source>
</reference>
<feature type="chain" id="PRO_0000456938" description="NLP effector protein 1">
    <location>
        <begin position="1"/>
        <end position="114"/>
    </location>
</feature>
<feature type="sequence conflict" description="In Ref. 1; QHG11501." evidence="3" ref="1">
    <original>L</original>
    <variation>V</variation>
    <location>
        <position position="39"/>
    </location>
</feature>